<gene>
    <name type="primary">pcaF</name>
</gene>
<comment type="function">
    <text>Catalyzes thiolytic cleavage of beta-ketoadipyl-CoA to succinyl-CoA and acetyl-CoA.</text>
</comment>
<comment type="catalytic activity">
    <reaction>
        <text>succinyl-CoA + acetyl-CoA = 3-oxoadipyl-CoA + CoA</text>
        <dbReference type="Rhea" id="RHEA:19481"/>
        <dbReference type="ChEBI" id="CHEBI:57287"/>
        <dbReference type="ChEBI" id="CHEBI:57288"/>
        <dbReference type="ChEBI" id="CHEBI:57292"/>
        <dbReference type="ChEBI" id="CHEBI:57348"/>
        <dbReference type="EC" id="2.3.1.174"/>
    </reaction>
</comment>
<comment type="pathway">
    <text>Aromatic compound metabolism; beta-ketoadipate pathway; acetyl-CoA and succinyl-CoA from 3-oxoadipate: step 2/2.</text>
</comment>
<comment type="similarity">
    <text evidence="3">Belongs to the thiolase-like superfamily. Thiolase family.</text>
</comment>
<accession>Q51956</accession>
<dbReference type="EC" id="2.3.1.174"/>
<dbReference type="EMBL" id="U10895">
    <property type="protein sequence ID" value="AAA85138.1"/>
    <property type="molecule type" value="Genomic_DNA"/>
</dbReference>
<dbReference type="SMR" id="Q51956"/>
<dbReference type="eggNOG" id="COG0183">
    <property type="taxonomic scope" value="Bacteria"/>
</dbReference>
<dbReference type="BioCyc" id="MetaCyc:MONOMER-3207"/>
<dbReference type="UniPathway" id="UPA00157">
    <property type="reaction ID" value="UER00263"/>
</dbReference>
<dbReference type="GO" id="GO:0033812">
    <property type="term" value="F:3-oxoadipyl-CoA thiolase activity"/>
    <property type="evidence" value="ECO:0007669"/>
    <property type="project" value="UniProtKB-EC"/>
</dbReference>
<dbReference type="GO" id="GO:0019619">
    <property type="term" value="P:3,4-dihydroxybenzoate catabolic process"/>
    <property type="evidence" value="ECO:0007669"/>
    <property type="project" value="InterPro"/>
</dbReference>
<dbReference type="GO" id="GO:0042952">
    <property type="term" value="P:beta-ketoadipate pathway"/>
    <property type="evidence" value="ECO:0007669"/>
    <property type="project" value="UniProtKB-UniPathway"/>
</dbReference>
<dbReference type="CDD" id="cd00751">
    <property type="entry name" value="thiolase"/>
    <property type="match status" value="1"/>
</dbReference>
<dbReference type="FunFam" id="3.40.47.10:FF:000010">
    <property type="entry name" value="Acetyl-CoA acetyltransferase (Thiolase)"/>
    <property type="match status" value="1"/>
</dbReference>
<dbReference type="Gene3D" id="3.40.47.10">
    <property type="match status" value="1"/>
</dbReference>
<dbReference type="InterPro" id="IPR012793">
    <property type="entry name" value="PcaF"/>
</dbReference>
<dbReference type="InterPro" id="IPR002155">
    <property type="entry name" value="Thiolase"/>
</dbReference>
<dbReference type="InterPro" id="IPR016039">
    <property type="entry name" value="Thiolase-like"/>
</dbReference>
<dbReference type="InterPro" id="IPR020615">
    <property type="entry name" value="Thiolase_acyl_enz_int_AS"/>
</dbReference>
<dbReference type="InterPro" id="IPR020610">
    <property type="entry name" value="Thiolase_AS"/>
</dbReference>
<dbReference type="InterPro" id="IPR020617">
    <property type="entry name" value="Thiolase_C"/>
</dbReference>
<dbReference type="InterPro" id="IPR020613">
    <property type="entry name" value="Thiolase_CS"/>
</dbReference>
<dbReference type="InterPro" id="IPR020616">
    <property type="entry name" value="Thiolase_N"/>
</dbReference>
<dbReference type="NCBIfam" id="TIGR01930">
    <property type="entry name" value="AcCoA-C-Actrans"/>
    <property type="match status" value="1"/>
</dbReference>
<dbReference type="NCBIfam" id="TIGR02430">
    <property type="entry name" value="pcaF"/>
    <property type="match status" value="1"/>
</dbReference>
<dbReference type="NCBIfam" id="NF006551">
    <property type="entry name" value="PRK09050.1"/>
    <property type="match status" value="1"/>
</dbReference>
<dbReference type="PANTHER" id="PTHR18919:SF107">
    <property type="entry name" value="ACETYL-COA ACETYLTRANSFERASE, CYTOSOLIC"/>
    <property type="match status" value="1"/>
</dbReference>
<dbReference type="PANTHER" id="PTHR18919">
    <property type="entry name" value="ACETYL-COA C-ACYLTRANSFERASE"/>
    <property type="match status" value="1"/>
</dbReference>
<dbReference type="Pfam" id="PF02803">
    <property type="entry name" value="Thiolase_C"/>
    <property type="match status" value="1"/>
</dbReference>
<dbReference type="Pfam" id="PF00108">
    <property type="entry name" value="Thiolase_N"/>
    <property type="match status" value="1"/>
</dbReference>
<dbReference type="PIRSF" id="PIRSF000429">
    <property type="entry name" value="Ac-CoA_Ac_transf"/>
    <property type="match status" value="1"/>
</dbReference>
<dbReference type="SUPFAM" id="SSF53901">
    <property type="entry name" value="Thiolase-like"/>
    <property type="match status" value="2"/>
</dbReference>
<dbReference type="PROSITE" id="PS00098">
    <property type="entry name" value="THIOLASE_1"/>
    <property type="match status" value="1"/>
</dbReference>
<dbReference type="PROSITE" id="PS00737">
    <property type="entry name" value="THIOLASE_2"/>
    <property type="match status" value="1"/>
</dbReference>
<dbReference type="PROSITE" id="PS00099">
    <property type="entry name" value="THIOLASE_3"/>
    <property type="match status" value="1"/>
</dbReference>
<sequence>MRDVFICDAIRTPIGRFGGALAGVRADDLAAVPLKALIEPNPAVQWDQVDEVFFGCANQAGEDNRNVARMALLLAGLPESIPGVTLNRLCASGMDAIGTAFRAIASGEMELAIAGGVESMSRAPFVMGKAESGYSRNMKLEDTTIGWRFINPLMKSQYGVDSMPETADNVADDYQVSRADQDAFALRSQQKAAAAQAAGFFAEEIVPVRIAHKKGETIVERDEHLRPETTLEALTKLKPVNGPDKTVTAGNASGVNDGAAALILASAEAVKKHGLTPRARVLGMASGGVAPRVMGIGPVPAVRKLTERLGVAVSDFDVIELNEAFASQGLAVLRELGVADDAPQVNPNGGAIALGHPLGMSGARLVLTALHQLEKSGGRKGLATMCVGVGQGLALAIERV</sequence>
<feature type="chain" id="PRO_0000206422" description="Beta-ketoadipyl-CoA thiolase">
    <location>
        <begin position="1"/>
        <end position="400"/>
    </location>
</feature>
<feature type="active site" description="Acyl-thioester intermediate" evidence="1">
    <location>
        <position position="90"/>
    </location>
</feature>
<feature type="active site" description="Proton acceptor" evidence="2">
    <location>
        <position position="356"/>
    </location>
</feature>
<feature type="active site" description="Proton acceptor" evidence="2">
    <location>
        <position position="386"/>
    </location>
</feature>
<proteinExistence type="inferred from homology"/>
<protein>
    <recommendedName>
        <fullName>Beta-ketoadipyl-CoA thiolase</fullName>
        <ecNumber>2.3.1.174</ecNumber>
    </recommendedName>
    <alternativeName>
        <fullName>3-oxoadipyl-CoA thiolase</fullName>
    </alternativeName>
</protein>
<evidence type="ECO:0000250" key="1"/>
<evidence type="ECO:0000255" key="2">
    <source>
        <dbReference type="PROSITE-ProRule" id="PRU10020"/>
    </source>
</evidence>
<evidence type="ECO:0000305" key="3"/>
<organism>
    <name type="scientific">Pseudomonas putida</name>
    <name type="common">Arthrobacter siderocapsulatus</name>
    <dbReference type="NCBI Taxonomy" id="303"/>
    <lineage>
        <taxon>Bacteria</taxon>
        <taxon>Pseudomonadati</taxon>
        <taxon>Pseudomonadota</taxon>
        <taxon>Gammaproteobacteria</taxon>
        <taxon>Pseudomonadales</taxon>
        <taxon>Pseudomonadaceae</taxon>
        <taxon>Pseudomonas</taxon>
    </lineage>
</organism>
<keyword id="KW-0012">Acyltransferase</keyword>
<keyword id="KW-0058">Aromatic hydrocarbons catabolism</keyword>
<keyword id="KW-0808">Transferase</keyword>
<reference key="1">
    <citation type="journal article" date="1994" name="J. Bacteriol.">
        <title>Identification of the pcaRKF gene cluster from Pseudomonas putida: involvement in chemotaxis, biodegradation, and transport of 4-hydroxybenzoate.</title>
        <authorList>
            <person name="Harwood C.S."/>
            <person name="Nichols N.N."/>
            <person name="Kim M.-K."/>
            <person name="Ditty J.L."/>
            <person name="Parales R.E."/>
        </authorList>
    </citation>
    <scope>NUCLEOTIDE SEQUENCE [GENOMIC DNA]</scope>
    <source>
        <strain>PRS2000</strain>
    </source>
</reference>
<name>PCAF_PSEPU</name>